<name>RS15_PYRAR</name>
<feature type="chain" id="PRO_0000354230" description="Small ribosomal subunit protein uS15">
    <location>
        <begin position="1"/>
        <end position="154"/>
    </location>
</feature>
<feature type="region of interest" description="Disordered" evidence="2">
    <location>
        <begin position="1"/>
        <end position="24"/>
    </location>
</feature>
<feature type="compositionally biased region" description="Basic residues" evidence="2">
    <location>
        <begin position="1"/>
        <end position="14"/>
    </location>
</feature>
<organism>
    <name type="scientific">Pyrobaculum arsenaticum (strain DSM 13514 / JCM 11321 / PZ6)</name>
    <dbReference type="NCBI Taxonomy" id="340102"/>
    <lineage>
        <taxon>Archaea</taxon>
        <taxon>Thermoproteota</taxon>
        <taxon>Thermoprotei</taxon>
        <taxon>Thermoproteales</taxon>
        <taxon>Thermoproteaceae</taxon>
        <taxon>Pyrobaculum</taxon>
    </lineage>
</organism>
<keyword id="KW-0687">Ribonucleoprotein</keyword>
<keyword id="KW-0689">Ribosomal protein</keyword>
<proteinExistence type="inferred from homology"/>
<evidence type="ECO:0000255" key="1">
    <source>
        <dbReference type="HAMAP-Rule" id="MF_01343"/>
    </source>
</evidence>
<evidence type="ECO:0000256" key="2">
    <source>
        <dbReference type="SAM" id="MobiDB-lite"/>
    </source>
</evidence>
<evidence type="ECO:0000305" key="3"/>
<gene>
    <name evidence="1" type="primary">rps15</name>
    <name type="ordered locus">Pars_1972</name>
</gene>
<accession>A4WMA2</accession>
<comment type="subunit">
    <text evidence="1">Part of the 30S ribosomal subunit.</text>
</comment>
<comment type="similarity">
    <text evidence="1">Belongs to the universal ribosomal protein uS15 family.</text>
</comment>
<reference key="1">
    <citation type="submission" date="2007-04" db="EMBL/GenBank/DDBJ databases">
        <title>Complete sequence of Pyrobaculum arsenaticum DSM 13514.</title>
        <authorList>
            <consortium name="US DOE Joint Genome Institute"/>
            <person name="Copeland A."/>
            <person name="Lucas S."/>
            <person name="Lapidus A."/>
            <person name="Barry K."/>
            <person name="Glavina del Rio T."/>
            <person name="Dalin E."/>
            <person name="Tice H."/>
            <person name="Pitluck S."/>
            <person name="Chain P."/>
            <person name="Malfatti S."/>
            <person name="Shin M."/>
            <person name="Vergez L."/>
            <person name="Schmutz J."/>
            <person name="Larimer F."/>
            <person name="Land M."/>
            <person name="Hauser L."/>
            <person name="Kyrpides N."/>
            <person name="Mikhailova N."/>
            <person name="Cozen A.E."/>
            <person name="Fitz-Gibbon S.T."/>
            <person name="House C.H."/>
            <person name="Saltikov C."/>
            <person name="Lowe T.M."/>
            <person name="Richardson P."/>
        </authorList>
    </citation>
    <scope>NUCLEOTIDE SEQUENCE [LARGE SCALE GENOMIC DNA]</scope>
    <source>
        <strain>ATCC 700994 / DSM 13514 / JCM 11321 / PZ6</strain>
    </source>
</reference>
<dbReference type="EMBL" id="CP000660">
    <property type="protein sequence ID" value="ABP51519.1"/>
    <property type="molecule type" value="Genomic_DNA"/>
</dbReference>
<dbReference type="SMR" id="A4WMA2"/>
<dbReference type="STRING" id="340102.Pars_1972"/>
<dbReference type="KEGG" id="pas:Pars_1972"/>
<dbReference type="HOGENOM" id="CLU_090139_2_0_2"/>
<dbReference type="PhylomeDB" id="A4WMA2"/>
<dbReference type="Proteomes" id="UP000001567">
    <property type="component" value="Chromosome"/>
</dbReference>
<dbReference type="GO" id="GO:0022627">
    <property type="term" value="C:cytosolic small ribosomal subunit"/>
    <property type="evidence" value="ECO:0007669"/>
    <property type="project" value="TreeGrafter"/>
</dbReference>
<dbReference type="GO" id="GO:0070181">
    <property type="term" value="F:small ribosomal subunit rRNA binding"/>
    <property type="evidence" value="ECO:0007669"/>
    <property type="project" value="TreeGrafter"/>
</dbReference>
<dbReference type="GO" id="GO:0003735">
    <property type="term" value="F:structural constituent of ribosome"/>
    <property type="evidence" value="ECO:0007669"/>
    <property type="project" value="InterPro"/>
</dbReference>
<dbReference type="GO" id="GO:0006412">
    <property type="term" value="P:translation"/>
    <property type="evidence" value="ECO:0007669"/>
    <property type="project" value="UniProtKB-UniRule"/>
</dbReference>
<dbReference type="CDD" id="cd00353">
    <property type="entry name" value="Ribosomal_S15p_S13e"/>
    <property type="match status" value="1"/>
</dbReference>
<dbReference type="FunFam" id="1.10.287.10:FF:000003">
    <property type="entry name" value="40S ribosomal protein S13"/>
    <property type="match status" value="1"/>
</dbReference>
<dbReference type="FunFam" id="4.10.860.130:FF:000001">
    <property type="entry name" value="40S ribosomal protein S13"/>
    <property type="match status" value="1"/>
</dbReference>
<dbReference type="Gene3D" id="4.10.860.130">
    <property type="match status" value="1"/>
</dbReference>
<dbReference type="Gene3D" id="1.10.287.10">
    <property type="entry name" value="S15/NS1, RNA-binding"/>
    <property type="match status" value="1"/>
</dbReference>
<dbReference type="HAMAP" id="MF_01343_A">
    <property type="entry name" value="Ribosomal_uS15_A"/>
    <property type="match status" value="1"/>
</dbReference>
<dbReference type="InterPro" id="IPR000589">
    <property type="entry name" value="Ribosomal_uS15"/>
</dbReference>
<dbReference type="InterPro" id="IPR023029">
    <property type="entry name" value="Ribosomal_uS15_arc_euk"/>
</dbReference>
<dbReference type="InterPro" id="IPR012606">
    <property type="entry name" value="Ribosomal_uS15_N"/>
</dbReference>
<dbReference type="InterPro" id="IPR009068">
    <property type="entry name" value="uS15_NS1_RNA-bd_sf"/>
</dbReference>
<dbReference type="NCBIfam" id="NF006331">
    <property type="entry name" value="PRK08561.1"/>
    <property type="match status" value="1"/>
</dbReference>
<dbReference type="PANTHER" id="PTHR11885">
    <property type="entry name" value="RIBOSOMAL PROTEIN S15P/S13E"/>
    <property type="match status" value="1"/>
</dbReference>
<dbReference type="PANTHER" id="PTHR11885:SF6">
    <property type="entry name" value="SMALL RIBOSOMAL SUBUNIT PROTEIN US15"/>
    <property type="match status" value="1"/>
</dbReference>
<dbReference type="Pfam" id="PF08069">
    <property type="entry name" value="Ribosomal_S13_N"/>
    <property type="match status" value="1"/>
</dbReference>
<dbReference type="Pfam" id="PF00312">
    <property type="entry name" value="Ribosomal_S15"/>
    <property type="match status" value="1"/>
</dbReference>
<dbReference type="SMART" id="SM01386">
    <property type="entry name" value="Ribosomal_S13_N"/>
    <property type="match status" value="1"/>
</dbReference>
<dbReference type="SMART" id="SM01387">
    <property type="entry name" value="Ribosomal_S15"/>
    <property type="match status" value="1"/>
</dbReference>
<dbReference type="SUPFAM" id="SSF47060">
    <property type="entry name" value="S15/NS1 RNA-binding domain"/>
    <property type="match status" value="1"/>
</dbReference>
<dbReference type="PROSITE" id="PS00362">
    <property type="entry name" value="RIBOSOMAL_S15"/>
    <property type="match status" value="1"/>
</dbReference>
<protein>
    <recommendedName>
        <fullName evidence="1">Small ribosomal subunit protein uS15</fullName>
    </recommendedName>
    <alternativeName>
        <fullName evidence="3">30S ribosomal protein S15</fullName>
    </alternativeName>
</protein>
<sequence>MAPVPHRSRHKKGRSGSVRPAHPTVPTWIQYTPEEVEQLAVELARRGFQPSQIGIVLRDQYGIPLVKSITGKKLVKVLEEHGIKYEIPEDLLNLIRRALRIRKHLEEHPKDMSSRRGLQLVESKIHRLIKYYKRVGRLPRDFVYNPQALSHLAT</sequence>